<reference key="1">
    <citation type="journal article" date="2002" name="Nature">
        <title>Sequence and analysis of chromosome 2 of Dictyostelium discoideum.</title>
        <authorList>
            <person name="Gloeckner G."/>
            <person name="Eichinger L."/>
            <person name="Szafranski K."/>
            <person name="Pachebat J.A."/>
            <person name="Bankier A.T."/>
            <person name="Dear P.H."/>
            <person name="Lehmann R."/>
            <person name="Baumgart C."/>
            <person name="Parra G."/>
            <person name="Abril J.F."/>
            <person name="Guigo R."/>
            <person name="Kumpf K."/>
            <person name="Tunggal B."/>
            <person name="Cox E.C."/>
            <person name="Quail M.A."/>
            <person name="Platzer M."/>
            <person name="Rosenthal A."/>
            <person name="Noegel A.A."/>
        </authorList>
    </citation>
    <scope>NUCLEOTIDE SEQUENCE [LARGE SCALE GENOMIC DNA]</scope>
    <source>
        <strain>AX4</strain>
    </source>
</reference>
<reference key="2">
    <citation type="journal article" date="2005" name="Nature">
        <title>The genome of the social amoeba Dictyostelium discoideum.</title>
        <authorList>
            <person name="Eichinger L."/>
            <person name="Pachebat J.A."/>
            <person name="Gloeckner G."/>
            <person name="Rajandream M.A."/>
            <person name="Sucgang R."/>
            <person name="Berriman M."/>
            <person name="Song J."/>
            <person name="Olsen R."/>
            <person name="Szafranski K."/>
            <person name="Xu Q."/>
            <person name="Tunggal B."/>
            <person name="Kummerfeld S."/>
            <person name="Madera M."/>
            <person name="Konfortov B.A."/>
            <person name="Rivero F."/>
            <person name="Bankier A.T."/>
            <person name="Lehmann R."/>
            <person name="Hamlin N."/>
            <person name="Davies R."/>
            <person name="Gaudet P."/>
            <person name="Fey P."/>
            <person name="Pilcher K."/>
            <person name="Chen G."/>
            <person name="Saunders D."/>
            <person name="Sodergren E.J."/>
            <person name="Davis P."/>
            <person name="Kerhornou A."/>
            <person name="Nie X."/>
            <person name="Hall N."/>
            <person name="Anjard C."/>
            <person name="Hemphill L."/>
            <person name="Bason N."/>
            <person name="Farbrother P."/>
            <person name="Desany B."/>
            <person name="Just E."/>
            <person name="Morio T."/>
            <person name="Rost R."/>
            <person name="Churcher C.M."/>
            <person name="Cooper J."/>
            <person name="Haydock S."/>
            <person name="van Driessche N."/>
            <person name="Cronin A."/>
            <person name="Goodhead I."/>
            <person name="Muzny D.M."/>
            <person name="Mourier T."/>
            <person name="Pain A."/>
            <person name="Lu M."/>
            <person name="Harper D."/>
            <person name="Lindsay R."/>
            <person name="Hauser H."/>
            <person name="James K.D."/>
            <person name="Quiles M."/>
            <person name="Madan Babu M."/>
            <person name="Saito T."/>
            <person name="Buchrieser C."/>
            <person name="Wardroper A."/>
            <person name="Felder M."/>
            <person name="Thangavelu M."/>
            <person name="Johnson D."/>
            <person name="Knights A."/>
            <person name="Loulseged H."/>
            <person name="Mungall K.L."/>
            <person name="Oliver K."/>
            <person name="Price C."/>
            <person name="Quail M.A."/>
            <person name="Urushihara H."/>
            <person name="Hernandez J."/>
            <person name="Rabbinowitsch E."/>
            <person name="Steffen D."/>
            <person name="Sanders M."/>
            <person name="Ma J."/>
            <person name="Kohara Y."/>
            <person name="Sharp S."/>
            <person name="Simmonds M.N."/>
            <person name="Spiegler S."/>
            <person name="Tivey A."/>
            <person name="Sugano S."/>
            <person name="White B."/>
            <person name="Walker D."/>
            <person name="Woodward J.R."/>
            <person name="Winckler T."/>
            <person name="Tanaka Y."/>
            <person name="Shaulsky G."/>
            <person name="Schleicher M."/>
            <person name="Weinstock G.M."/>
            <person name="Rosenthal A."/>
            <person name="Cox E.C."/>
            <person name="Chisholm R.L."/>
            <person name="Gibbs R.A."/>
            <person name="Loomis W.F."/>
            <person name="Platzer M."/>
            <person name="Kay R.R."/>
            <person name="Williams J.G."/>
            <person name="Dear P.H."/>
            <person name="Noegel A.A."/>
            <person name="Barrell B.G."/>
            <person name="Kuspa A."/>
        </authorList>
    </citation>
    <scope>NUCLEOTIDE SEQUENCE [LARGE SCALE GENOMIC DNA]</scope>
    <source>
        <strain>AX4</strain>
    </source>
</reference>
<reference key="3">
    <citation type="journal article" date="2003" name="BMC Dev. Biol.">
        <title>IfkA, a presumptive eIF2 alpha kinase of Dictyostelium, is required for proper timing of aggregation and regulation of mound size.</title>
        <authorList>
            <person name="Fang R."/>
            <person name="Xiong Y."/>
            <person name="Singleton C.K."/>
        </authorList>
    </citation>
    <scope>FUNCTION</scope>
    <scope>DISRUPTION PHENOTYPE</scope>
    <scope>DEVELOPMENTAL STAGE</scope>
</reference>
<reference key="4">
    <citation type="journal article" date="2006" name="Differentiation">
        <title>Disruption of the ifkA and ifkB genes results in altered cell adhesion, morphological defects and a propensity to form pre-stalk O cells during development of Dictyostelium.</title>
        <authorList>
            <person name="Rai M."/>
            <person name="Xiong Y."/>
            <person name="Singleton C.K."/>
        </authorList>
    </citation>
    <scope>DISRUPTION PHENOTYPE</scope>
</reference>
<feature type="chain" id="PRO_0000362011" description="Probable serine/threonine-protein kinase ifkA">
    <location>
        <begin position="1"/>
        <end position="2258"/>
    </location>
</feature>
<feature type="domain" description="Protein kinase 1" evidence="3">
    <location>
        <begin position="319"/>
        <end position="691"/>
    </location>
</feature>
<feature type="domain" description="Protein kinase 2" evidence="3">
    <location>
        <begin position="894"/>
        <end position="1482"/>
    </location>
</feature>
<feature type="region of interest" description="Disordered" evidence="4">
    <location>
        <begin position="43"/>
        <end position="108"/>
    </location>
</feature>
<feature type="region of interest" description="Disordered" evidence="4">
    <location>
        <begin position="189"/>
        <end position="308"/>
    </location>
</feature>
<feature type="region of interest" description="Disordered" evidence="4">
    <location>
        <begin position="358"/>
        <end position="398"/>
    </location>
</feature>
<feature type="region of interest" description="Disordered" evidence="4">
    <location>
        <begin position="741"/>
        <end position="768"/>
    </location>
</feature>
<feature type="region of interest" description="Disordered" evidence="4">
    <location>
        <begin position="782"/>
        <end position="870"/>
    </location>
</feature>
<feature type="region of interest" description="Disordered" evidence="4">
    <location>
        <begin position="1053"/>
        <end position="1259"/>
    </location>
</feature>
<feature type="region of interest" description="Disordered" evidence="4">
    <location>
        <begin position="1343"/>
        <end position="1370"/>
    </location>
</feature>
<feature type="region of interest" description="Disordered" evidence="4">
    <location>
        <begin position="2048"/>
        <end position="2104"/>
    </location>
</feature>
<feature type="coiled-coil region" evidence="2">
    <location>
        <begin position="273"/>
        <end position="309"/>
    </location>
</feature>
<feature type="compositionally biased region" description="Low complexity" evidence="4">
    <location>
        <begin position="45"/>
        <end position="57"/>
    </location>
</feature>
<feature type="compositionally biased region" description="Acidic residues" evidence="4">
    <location>
        <begin position="58"/>
        <end position="100"/>
    </location>
</feature>
<feature type="compositionally biased region" description="Low complexity" evidence="4">
    <location>
        <begin position="191"/>
        <end position="301"/>
    </location>
</feature>
<feature type="compositionally biased region" description="Low complexity" evidence="4">
    <location>
        <begin position="359"/>
        <end position="398"/>
    </location>
</feature>
<feature type="compositionally biased region" description="Low complexity" evidence="4">
    <location>
        <begin position="746"/>
        <end position="768"/>
    </location>
</feature>
<feature type="compositionally biased region" description="Polar residues" evidence="4">
    <location>
        <begin position="782"/>
        <end position="791"/>
    </location>
</feature>
<feature type="compositionally biased region" description="Pro residues" evidence="4">
    <location>
        <begin position="793"/>
        <end position="805"/>
    </location>
</feature>
<feature type="compositionally biased region" description="Low complexity" evidence="4">
    <location>
        <begin position="841"/>
        <end position="870"/>
    </location>
</feature>
<feature type="compositionally biased region" description="Low complexity" evidence="4">
    <location>
        <begin position="1053"/>
        <end position="1094"/>
    </location>
</feature>
<feature type="compositionally biased region" description="Basic residues" evidence="4">
    <location>
        <begin position="1095"/>
        <end position="1106"/>
    </location>
</feature>
<feature type="compositionally biased region" description="Low complexity" evidence="4">
    <location>
        <begin position="1156"/>
        <end position="1185"/>
    </location>
</feature>
<feature type="compositionally biased region" description="Acidic residues" evidence="4">
    <location>
        <begin position="1206"/>
        <end position="1233"/>
    </location>
</feature>
<feature type="compositionally biased region" description="Low complexity" evidence="4">
    <location>
        <begin position="1242"/>
        <end position="1251"/>
    </location>
</feature>
<feature type="compositionally biased region" description="Low complexity" evidence="4">
    <location>
        <begin position="1347"/>
        <end position="1368"/>
    </location>
</feature>
<feature type="compositionally biased region" description="Gly residues" evidence="4">
    <location>
        <begin position="2048"/>
        <end position="2072"/>
    </location>
</feature>
<feature type="compositionally biased region" description="Low complexity" evidence="4">
    <location>
        <begin position="2085"/>
        <end position="2099"/>
    </location>
</feature>
<feature type="active site" description="Proton acceptor" evidence="1">
    <location>
        <position position="498"/>
    </location>
</feature>
<feature type="active site" description="Proton acceptor" evidence="1">
    <location>
        <position position="1313"/>
    </location>
</feature>
<feature type="binding site" evidence="3">
    <location>
        <begin position="325"/>
        <end position="333"/>
    </location>
    <ligand>
        <name>ATP</name>
        <dbReference type="ChEBI" id="CHEBI:30616"/>
    </ligand>
</feature>
<feature type="binding site" evidence="3">
    <location>
        <position position="348"/>
    </location>
    <ligand>
        <name>ATP</name>
        <dbReference type="ChEBI" id="CHEBI:30616"/>
    </ligand>
</feature>
<feature type="binding site" evidence="3">
    <location>
        <begin position="900"/>
        <end position="908"/>
    </location>
    <ligand>
        <name>ATP</name>
        <dbReference type="ChEBI" id="CHEBI:30616"/>
    </ligand>
</feature>
<feature type="binding site" evidence="3">
    <location>
        <position position="923"/>
    </location>
    <ligand>
        <name>ATP</name>
        <dbReference type="ChEBI" id="CHEBI:30616"/>
    </ligand>
</feature>
<accession>Q558U1</accession>
<accession>Q86B04</accession>
<dbReference type="EC" id="2.7.11.1"/>
<dbReference type="EMBL" id="AAFI02000008">
    <property type="protein sequence ID" value="EAL71056.1"/>
    <property type="molecule type" value="Genomic_DNA"/>
</dbReference>
<dbReference type="RefSeq" id="XP_644975.1">
    <property type="nucleotide sequence ID" value="XM_639883.1"/>
</dbReference>
<dbReference type="SMR" id="Q558U1"/>
<dbReference type="FunCoup" id="Q558U1">
    <property type="interactions" value="589"/>
</dbReference>
<dbReference type="STRING" id="44689.Q558U1"/>
<dbReference type="PaxDb" id="44689-DDB0185218"/>
<dbReference type="EnsemblProtists" id="EAL71056">
    <property type="protein sequence ID" value="EAL71056"/>
    <property type="gene ID" value="DDB_G0272837"/>
</dbReference>
<dbReference type="GeneID" id="8618652"/>
<dbReference type="KEGG" id="ddi:DDB_G0272837"/>
<dbReference type="dictyBase" id="DDB_G0272837">
    <property type="gene designation" value="ifkA"/>
</dbReference>
<dbReference type="VEuPathDB" id="AmoebaDB:DDB_G0272837"/>
<dbReference type="VEuPathDB" id="AmoebaDB:DDB_G0276829"/>
<dbReference type="eggNOG" id="KOG0198">
    <property type="taxonomic scope" value="Eukaryota"/>
</dbReference>
<dbReference type="eggNOG" id="KOG1035">
    <property type="taxonomic scope" value="Eukaryota"/>
</dbReference>
<dbReference type="HOGENOM" id="CLU_001222_0_0_1"/>
<dbReference type="InParanoid" id="Q558U1"/>
<dbReference type="OMA" id="FEMCHPF"/>
<dbReference type="PhylomeDB" id="Q558U1"/>
<dbReference type="PRO" id="PR:Q558U1"/>
<dbReference type="Proteomes" id="UP000002195">
    <property type="component" value="Chromosome 2"/>
</dbReference>
<dbReference type="GO" id="GO:0005737">
    <property type="term" value="C:cytoplasm"/>
    <property type="evidence" value="ECO:0000318"/>
    <property type="project" value="GO_Central"/>
</dbReference>
<dbReference type="GO" id="GO:0005829">
    <property type="term" value="C:cytosol"/>
    <property type="evidence" value="ECO:0000318"/>
    <property type="project" value="GO_Central"/>
</dbReference>
<dbReference type="GO" id="GO:0005634">
    <property type="term" value="C:nucleus"/>
    <property type="evidence" value="ECO:0000318"/>
    <property type="project" value="GO_Central"/>
</dbReference>
<dbReference type="GO" id="GO:0005524">
    <property type="term" value="F:ATP binding"/>
    <property type="evidence" value="ECO:0000305"/>
    <property type="project" value="dictyBase"/>
</dbReference>
<dbReference type="GO" id="GO:0004694">
    <property type="term" value="F:eukaryotic translation initiation factor 2alpha kinase activity"/>
    <property type="evidence" value="ECO:0000315"/>
    <property type="project" value="dictyBase"/>
</dbReference>
<dbReference type="GO" id="GO:0106310">
    <property type="term" value="F:protein serine kinase activity"/>
    <property type="evidence" value="ECO:0007669"/>
    <property type="project" value="RHEA"/>
</dbReference>
<dbReference type="GO" id="GO:0140582">
    <property type="term" value="P:adenylate cyclase-activating G protein-coupled cAMP receptor signaling pathway"/>
    <property type="evidence" value="ECO:0000315"/>
    <property type="project" value="dictyBase"/>
</dbReference>
<dbReference type="GO" id="GO:0031152">
    <property type="term" value="P:aggregation involved in sorocarp development"/>
    <property type="evidence" value="ECO:0000315"/>
    <property type="project" value="dictyBase"/>
</dbReference>
<dbReference type="GO" id="GO:0098609">
    <property type="term" value="P:cell-cell adhesion"/>
    <property type="evidence" value="ECO:0000316"/>
    <property type="project" value="dictyBase"/>
</dbReference>
<dbReference type="GO" id="GO:0031589">
    <property type="term" value="P:cell-substrate adhesion"/>
    <property type="evidence" value="ECO:0000316"/>
    <property type="project" value="dictyBase"/>
</dbReference>
<dbReference type="GO" id="GO:0034198">
    <property type="term" value="P:cellular response to amino acid starvation"/>
    <property type="evidence" value="ECO:0000318"/>
    <property type="project" value="GO_Central"/>
</dbReference>
<dbReference type="GO" id="GO:0048255">
    <property type="term" value="P:mRNA stabilization"/>
    <property type="evidence" value="ECO:0000315"/>
    <property type="project" value="dictyBase"/>
</dbReference>
<dbReference type="GO" id="GO:0031158">
    <property type="term" value="P:negative regulation of aggregate size involved in sorocarp development"/>
    <property type="evidence" value="ECO:0000315"/>
    <property type="project" value="dictyBase"/>
</dbReference>
<dbReference type="GO" id="GO:0032057">
    <property type="term" value="P:negative regulation of translational initiation in response to stress"/>
    <property type="evidence" value="ECO:0000318"/>
    <property type="project" value="GO_Central"/>
</dbReference>
<dbReference type="GO" id="GO:0006417">
    <property type="term" value="P:regulation of translation"/>
    <property type="evidence" value="ECO:0000315"/>
    <property type="project" value="dictyBase"/>
</dbReference>
<dbReference type="GO" id="GO:0006446">
    <property type="term" value="P:regulation of translational initiation"/>
    <property type="evidence" value="ECO:0000250"/>
    <property type="project" value="dictyBase"/>
</dbReference>
<dbReference type="FunFam" id="3.40.50.800:FF:000009">
    <property type="entry name" value="Eukaryotic translation initiation factor 2-alpha kinase"/>
    <property type="match status" value="1"/>
</dbReference>
<dbReference type="FunFam" id="1.10.510.10:FF:002874">
    <property type="entry name" value="Probable serine/threonine-protein kinase ifkA"/>
    <property type="match status" value="1"/>
</dbReference>
<dbReference type="FunFam" id="3.30.200.20:FF:001459">
    <property type="entry name" value="Probable serine/threonine-protein kinase ifkB"/>
    <property type="match status" value="1"/>
</dbReference>
<dbReference type="FunFam" id="3.30.930.10:FF:000074">
    <property type="entry name" value="Serine/threonine-protein kinase gcn2"/>
    <property type="match status" value="1"/>
</dbReference>
<dbReference type="Gene3D" id="3.40.50.800">
    <property type="entry name" value="Anticodon-binding domain"/>
    <property type="match status" value="1"/>
</dbReference>
<dbReference type="Gene3D" id="3.30.930.10">
    <property type="entry name" value="Bira Bifunctional Protein, Domain 2"/>
    <property type="match status" value="1"/>
</dbReference>
<dbReference type="Gene3D" id="3.30.200.20">
    <property type="entry name" value="Phosphorylase Kinase, domain 1"/>
    <property type="match status" value="2"/>
</dbReference>
<dbReference type="Gene3D" id="1.10.510.10">
    <property type="entry name" value="Transferase(Phosphotransferase) domain 1"/>
    <property type="match status" value="2"/>
</dbReference>
<dbReference type="InterPro" id="IPR045864">
    <property type="entry name" value="aa-tRNA-synth_II/BPL/LPL"/>
</dbReference>
<dbReference type="InterPro" id="IPR036621">
    <property type="entry name" value="Anticodon-bd_dom_sf"/>
</dbReference>
<dbReference type="InterPro" id="IPR050339">
    <property type="entry name" value="CC_SR_Kinase"/>
</dbReference>
<dbReference type="InterPro" id="IPR041715">
    <property type="entry name" value="HisRS-like_core"/>
</dbReference>
<dbReference type="InterPro" id="IPR024435">
    <property type="entry name" value="HisRS-related_dom"/>
</dbReference>
<dbReference type="InterPro" id="IPR011009">
    <property type="entry name" value="Kinase-like_dom_sf"/>
</dbReference>
<dbReference type="InterPro" id="IPR000719">
    <property type="entry name" value="Prot_kinase_dom"/>
</dbReference>
<dbReference type="InterPro" id="IPR017441">
    <property type="entry name" value="Protein_kinase_ATP_BS"/>
</dbReference>
<dbReference type="InterPro" id="IPR008271">
    <property type="entry name" value="Ser/Thr_kinase_AS"/>
</dbReference>
<dbReference type="PANTHER" id="PTHR11042">
    <property type="entry name" value="EUKARYOTIC TRANSLATION INITIATION FACTOR 2-ALPHA KINASE EIF2-ALPHA KINASE -RELATED"/>
    <property type="match status" value="1"/>
</dbReference>
<dbReference type="PANTHER" id="PTHR11042:SF188">
    <property type="entry name" value="SERINE_THREONINE-PROTEIN KINASE IFKA-RELATED"/>
    <property type="match status" value="1"/>
</dbReference>
<dbReference type="Pfam" id="PF12745">
    <property type="entry name" value="HGTP_anticodon2"/>
    <property type="match status" value="1"/>
</dbReference>
<dbReference type="Pfam" id="PF00069">
    <property type="entry name" value="Pkinase"/>
    <property type="match status" value="3"/>
</dbReference>
<dbReference type="Pfam" id="PF13393">
    <property type="entry name" value="tRNA-synt_His"/>
    <property type="match status" value="1"/>
</dbReference>
<dbReference type="SMART" id="SM00220">
    <property type="entry name" value="S_TKc"/>
    <property type="match status" value="2"/>
</dbReference>
<dbReference type="SUPFAM" id="SSF52954">
    <property type="entry name" value="Class II aaRS ABD-related"/>
    <property type="match status" value="1"/>
</dbReference>
<dbReference type="SUPFAM" id="SSF55681">
    <property type="entry name" value="Class II aaRS and biotin synthetases"/>
    <property type="match status" value="1"/>
</dbReference>
<dbReference type="SUPFAM" id="SSF56112">
    <property type="entry name" value="Protein kinase-like (PK-like)"/>
    <property type="match status" value="2"/>
</dbReference>
<dbReference type="PROSITE" id="PS00107">
    <property type="entry name" value="PROTEIN_KINASE_ATP"/>
    <property type="match status" value="1"/>
</dbReference>
<dbReference type="PROSITE" id="PS50011">
    <property type="entry name" value="PROTEIN_KINASE_DOM"/>
    <property type="match status" value="2"/>
</dbReference>
<dbReference type="PROSITE" id="PS00108">
    <property type="entry name" value="PROTEIN_KINASE_ST"/>
    <property type="match status" value="2"/>
</dbReference>
<evidence type="ECO:0000250" key="1"/>
<evidence type="ECO:0000255" key="2"/>
<evidence type="ECO:0000255" key="3">
    <source>
        <dbReference type="PROSITE-ProRule" id="PRU00159"/>
    </source>
</evidence>
<evidence type="ECO:0000256" key="4">
    <source>
        <dbReference type="SAM" id="MobiDB-lite"/>
    </source>
</evidence>
<evidence type="ECO:0000269" key="5">
    <source>
    </source>
</evidence>
<evidence type="ECO:0000269" key="6">
    <source>
    </source>
</evidence>
<sequence length="2258" mass="252390">MAPGEIIIFELCQAVQEFLLLYNKETVSLHEEMIKRLNTNINRVNSSDDINNNNNNNNDDDDDNDDYDDSDDENSDSDYDDYDDSDDENSDDEFYSDDEDYNTRHQMGDIGSSVNKIINSIDHTISHGGGVGVGIGSGNGLFSKSSSSSSPMIPYNFSFDSLNGFDPDIIFEDSFQTPLKGSSSIDFEEMNNLTNSNNSNSTATTTTTTTTNNNNNNNTNNNNNNNSNNNNNNNNNNNNTNNNTNNNNNNNNNNNNNNNNNNNNNNNNNNNSNNNNNISNNKINKINNNNNNKELIDNNNNNKDKENDLINDTIPKIKWKKGSCIERKSNYSVYRGVDEDTDRKLICKIVNLNIDDRSSSSLTSLSNSNNNNSNNNNNNNNNNNNNNNNNNNNNNNNNLSIDVVELKKRLIEKVKMIQKEIESMKYLGNPYIIKYLGTNFQEGQNTLYIFQEYNSTLTLQQKILSNGIGFEESQVKKFTYQLLLGLLYLHSQHIPHRDFKSHNIFFNQSTSKMLLSNYGGRNIKIFDHFEKLNSLKNLNSWISSTNNSINNINNINNNNNNNNNNINTTTTQNQINNEIDRREDIINLGIVVLEMLCGSDLANNQTVLIYLAQLNLLNNQQQNQNFIQPPPLQYQLQQQYDLIKEIEQKTHPSSPISNNAKDFLSLCFTINGNGSTNDSLEAGILLKHPFLASNSNSTPPPSNFLNFTNNIKFLDQRSAATQALLSSPHSLIPQPIQTLIKSQTPNNNNDNNNLASSNELLSSSNGSNIDLRSTNSSIVSNPLATSSSLDNITPPPSRPISPKPSPLNKRNQKLQTSQQKPPLSPPQTPLKQIPQSPQSPPQQNFNTPPTTTTTTTTPTATPTTPTMTPLTPIQKQQQIDYDMFRYHSRYRTDFEEIEMIGKGGFGVVVKSRNKLDCRYYAIKKIKTKGYTDSNQEPLTNKLLREVTTLSRLHHQFVVRYYQAWIEKSCDSFQSLEEGNEDLSGDLETDASEDWFMQSSINSRSIISRDSYSGLSTSNSNVGGVNNTAGGGDSVSNANSNKSMIVGNSNKKLTLSSSNTSSSSSLLSNNKSKILNTSKSTSTNTSTSTSTSNTNKNKKISKKKKSKLSPLMKPKNKKNKNNGESEQSSSDSENGENGMKSRIIENASDSYSDDDNNNNNNNDNNNNYHSDNESDSFSGSISMSDGNGSGYEATDDEDIINNSGSFDENENDDDDEEDDDDEYDEEDDDYETFDFQDKSRVVSNNSKLSTSSSRKKPPKETHTLYIQMEYCSKKTLKTLIDNVGGIAEEEAFRLLRQIVEGLNHIHSQQIIHRDLKPANIFIDNEQNVKIGDFGLATSGAPVSKSDDLNSSTSNTANNINLSSSTNSTAQQTPMWDLNDENLSMTGGVGTPFYCCPEILEKNTKHYGTKVDMYSLGIIFFEMCFQFQTQMERSNILRDLRDNLKFPPGFESTKPDQTQIIRSLLSRDPTQRPSTKQLLESGLLPSKMEDDILKEAIKTIANPTISLFSYLMEKLFCLSNDEHIMSRYLYTSNPSLTPMHLICREKTFSRLEKIFLNHGSIRIDTPTLFPKNPTNSTHPGAANVAKFLDESGTVVYLPYDLTIPWARHVVIHNIQQAKRYTFSKVYRRSQPGFSPKELYECDFDIIGPSKSRHISDAETLRIIIEIMEEFKDELFGNNSGSNSGSGSGGSINYKIRINHYGLLDSILSECGVEKRFFTVVYQTVAQLHWRLNWAQVAQSLKEHGLSASIVSNISTYFRQRGELAQCVTQLESLLANHKEATTGISDLKILVRNLQMINIIPRFLLDLSLIHNHQYYEGLVFQAYIERPTLSNPSRTEIIMSGGRYDKLIKSLHPNPSLSNNIVSGVGVTLACEKIVNSVLNYRQHLLNNCFNTTYTRRNKDPPNSNNNPNNNNLNNNVSIFTKFQSHIEVFVCSLGSSLLGEKLQVASQLWSAGIKADYSQTDYYSSEDIYSNCRENGIPWVVILREKAFQIGKLKVKQIETRQERTVARKDLVDFFLKSRKHNVDSKNIIQNTSSSDLSNLIGGINNSGSGGSGGSGGGSSMSSGGGGGGNSNIGGSDHHHHGHHSNQSTSSSGNSNNSNTQQTSPIQHHVHFSNTKSIIGSSGIISNATFSGGSSSSSNIIHFDEPTDSFSTQIVYQGVEEIKKSKIETLVQTSLSKLFRGFIQSKSSTIRVIVTDLAYSVIRDLQISESHDNISKFQRVSKEKLLQLKNQIFKWKVYPFIVIHSIKDDKSVIFNSVV</sequence>
<keyword id="KW-0067">ATP-binding</keyword>
<keyword id="KW-0175">Coiled coil</keyword>
<keyword id="KW-0418">Kinase</keyword>
<keyword id="KW-0547">Nucleotide-binding</keyword>
<keyword id="KW-1185">Reference proteome</keyword>
<keyword id="KW-0677">Repeat</keyword>
<keyword id="KW-0723">Serine/threonine-protein kinase</keyword>
<keyword id="KW-0808">Transferase</keyword>
<comment type="function">
    <text evidence="5">Phosphorylates eIF2-alpha, from 1 to 7 hours after the onset of development or during the preaggregation state, resulting in a shift from polysomes to free ribosomes for bulk mRNA.</text>
</comment>
<comment type="catalytic activity">
    <reaction>
        <text>L-seryl-[protein] + ATP = O-phospho-L-seryl-[protein] + ADP + H(+)</text>
        <dbReference type="Rhea" id="RHEA:17989"/>
        <dbReference type="Rhea" id="RHEA-COMP:9863"/>
        <dbReference type="Rhea" id="RHEA-COMP:11604"/>
        <dbReference type="ChEBI" id="CHEBI:15378"/>
        <dbReference type="ChEBI" id="CHEBI:29999"/>
        <dbReference type="ChEBI" id="CHEBI:30616"/>
        <dbReference type="ChEBI" id="CHEBI:83421"/>
        <dbReference type="ChEBI" id="CHEBI:456216"/>
        <dbReference type="EC" id="2.7.11.1"/>
    </reaction>
</comment>
<comment type="catalytic activity">
    <reaction>
        <text>L-threonyl-[protein] + ATP = O-phospho-L-threonyl-[protein] + ADP + H(+)</text>
        <dbReference type="Rhea" id="RHEA:46608"/>
        <dbReference type="Rhea" id="RHEA-COMP:11060"/>
        <dbReference type="Rhea" id="RHEA-COMP:11605"/>
        <dbReference type="ChEBI" id="CHEBI:15378"/>
        <dbReference type="ChEBI" id="CHEBI:30013"/>
        <dbReference type="ChEBI" id="CHEBI:30616"/>
        <dbReference type="ChEBI" id="CHEBI:61977"/>
        <dbReference type="ChEBI" id="CHEBI:456216"/>
        <dbReference type="EC" id="2.7.11.1"/>
    </reaction>
</comment>
<comment type="developmental stage">
    <text evidence="5">Expression dramatically drops soon after the onset of development and remains at a low level for the remainder of development.</text>
</comment>
<comment type="disruption phenotype">
    <text evidence="5 6">IfkA null cells have defects such as an earlier aggregation, a formation of larger than normal mounds and ultimately a formation of fruiting bodies that are also larger than normal. The early aggregation phenotype reflects an apparent, earlier than normal establishment of the cAMP pulsing system. Cells lacking ifkA and ifkB display severe morphological and patterning defects. Mutant cells aggregate in streams that give tightly clumped mounds. Fingers form from the mounds but remain attached to one another, especially at their bases. The fingers culminate to give fused and entangled structures lacking proper stalk but containing some spores.</text>
</comment>
<comment type="similarity">
    <text evidence="3">Belongs to the protein kinase superfamily. Ser/Thr protein kinase family.</text>
</comment>
<name>IFKA_DICDI</name>
<gene>
    <name type="primary">ifkA</name>
    <name type="ORF">DDB_G0272837</name>
</gene>
<proteinExistence type="evidence at transcript level"/>
<protein>
    <recommendedName>
        <fullName>Probable serine/threonine-protein kinase ifkA</fullName>
        <ecNumber>2.7.11.1</ecNumber>
    </recommendedName>
    <alternativeName>
        <fullName>Initiation factor kinase A</fullName>
    </alternativeName>
</protein>
<organism>
    <name type="scientific">Dictyostelium discoideum</name>
    <name type="common">Social amoeba</name>
    <dbReference type="NCBI Taxonomy" id="44689"/>
    <lineage>
        <taxon>Eukaryota</taxon>
        <taxon>Amoebozoa</taxon>
        <taxon>Evosea</taxon>
        <taxon>Eumycetozoa</taxon>
        <taxon>Dictyostelia</taxon>
        <taxon>Dictyosteliales</taxon>
        <taxon>Dictyosteliaceae</taxon>
        <taxon>Dictyostelium</taxon>
    </lineage>
</organism>